<dbReference type="EMBL" id="AJ720758">
    <property type="protein sequence ID" value="CAG32417.1"/>
    <property type="molecule type" value="mRNA"/>
</dbReference>
<dbReference type="RefSeq" id="NP_001025895.1">
    <property type="nucleotide sequence ID" value="NM_001030724.2"/>
</dbReference>
<dbReference type="SMR" id="Q5ZIM6"/>
<dbReference type="FunCoup" id="Q5ZIM6">
    <property type="interactions" value="1383"/>
</dbReference>
<dbReference type="STRING" id="9031.ENSGALP00000008693"/>
<dbReference type="PaxDb" id="9031-ENSGALP00000008693"/>
<dbReference type="GeneID" id="417653"/>
<dbReference type="KEGG" id="gga:417653"/>
<dbReference type="CTD" id="26574"/>
<dbReference type="VEuPathDB" id="HostDB:geneid_417653"/>
<dbReference type="eggNOG" id="KOG2773">
    <property type="taxonomic scope" value="Eukaryota"/>
</dbReference>
<dbReference type="InParanoid" id="Q5ZIM6"/>
<dbReference type="OrthoDB" id="5783963at2759"/>
<dbReference type="PhylomeDB" id="Q5ZIM6"/>
<dbReference type="PRO" id="PR:Q5ZIM6"/>
<dbReference type="Proteomes" id="UP000000539">
    <property type="component" value="Chromosome 19"/>
</dbReference>
<dbReference type="Bgee" id="ENSGALG00000005420">
    <property type="expression patterns" value="Expressed in ovary and 12 other cell types or tissues"/>
</dbReference>
<dbReference type="GO" id="GO:0005730">
    <property type="term" value="C:nucleolus"/>
    <property type="evidence" value="ECO:0000318"/>
    <property type="project" value="GO_Central"/>
</dbReference>
<dbReference type="InterPro" id="IPR025160">
    <property type="entry name" value="AATF"/>
</dbReference>
<dbReference type="InterPro" id="IPR039223">
    <property type="entry name" value="AATF/Bfr2"/>
</dbReference>
<dbReference type="InterPro" id="IPR012617">
    <property type="entry name" value="AATF_C"/>
</dbReference>
<dbReference type="PANTHER" id="PTHR15565">
    <property type="entry name" value="AATF PROTEIN APOPTOSIS ANTAGONIZING TRANSCRIPTION FACTOR"/>
    <property type="match status" value="1"/>
</dbReference>
<dbReference type="PANTHER" id="PTHR15565:SF0">
    <property type="entry name" value="PROTEIN AATF"/>
    <property type="match status" value="1"/>
</dbReference>
<dbReference type="Pfam" id="PF13339">
    <property type="entry name" value="AATF-Che1"/>
    <property type="match status" value="1"/>
</dbReference>
<dbReference type="Pfam" id="PF08164">
    <property type="entry name" value="TRAUB"/>
    <property type="match status" value="1"/>
</dbReference>
<comment type="function">
    <text evidence="1">Part of the small subunit (SSU) processome, first precursor of the small eukaryotic ribosomal subunit. During the assembly of the SSU processome in the nucleolus, many ribosome biogenesis factors, an RNA chaperone and ribosomal proteins associate with the nascent pre-rRNA and work in concert to generate RNA folding, modifications, rearrangements and cleavage as well as targeted degradation of pre-ribosomal RNA by the RNA exosome (By similarity). May function as a general inhibitor of the histone deacetylase HDAC1 (By similarity).</text>
</comment>
<comment type="subunit">
    <text evidence="1">Part of the small subunit (SSU) processome, composed of more than 70 proteins and the RNA chaperone small nucleolar RNA (snoRNA) U3.</text>
</comment>
<comment type="subcellular location">
    <subcellularLocation>
        <location evidence="1">Nucleus</location>
        <location evidence="1">Nucleolus</location>
    </subcellularLocation>
</comment>
<comment type="similarity">
    <text evidence="3">Belongs to the AATF family.</text>
</comment>
<sequence>MAAPLAQQLEELLNPRPDLRDPEDDAEEATVAKVIDRFEDETADDVLPVGNIRKKASVSLLEADQRYSGKATSRKALQEELWGDALSEEGSAEEALDEWYSGSEDSEDNGSSGSKTEEQPSSAGSDQEDNLEDDEERDSSAKAPKFSFQNITDFEKFAEGMDDVGSSDGEDEDDASMEEGSDDEKYEGENHDHVKDTNDNEDDGGVMTFSKGQTSDEVEKGKAVKNQLALWDQILEGRIKMQKALVIVNRLPQPDTFPLFRKEGGQEFDSAVESCCKAVDTLLRVLVDIQDELLYQCPGTRHLVDGKQSKPESDDEIPSSSDEERAGEAQEKRKRPPKRKLKAEDIPEFIAKRYSDYRTYRNHILQKWHEKTKLASGKMAKGFGAFERSILTQIDHILMDKERLLRRTQTKRSVYRVLGKEEQDSHPVPEHLPENSEVLPQADSNRHLKDIDEEIFDDDDFYHQLLRELIERKTTSLDPNDQVAMGRQWLAIQKLRSKIKKKVDRKASKGRKIRYHVHSKLVSFMAPIDHCTMNDDARTELYRSLFGRMMQSEGPERGWHPGPPAPAGSAPYTL</sequence>
<organism>
    <name type="scientific">Gallus gallus</name>
    <name type="common">Chicken</name>
    <dbReference type="NCBI Taxonomy" id="9031"/>
    <lineage>
        <taxon>Eukaryota</taxon>
        <taxon>Metazoa</taxon>
        <taxon>Chordata</taxon>
        <taxon>Craniata</taxon>
        <taxon>Vertebrata</taxon>
        <taxon>Euteleostomi</taxon>
        <taxon>Archelosauria</taxon>
        <taxon>Archosauria</taxon>
        <taxon>Dinosauria</taxon>
        <taxon>Saurischia</taxon>
        <taxon>Theropoda</taxon>
        <taxon>Coelurosauria</taxon>
        <taxon>Aves</taxon>
        <taxon>Neognathae</taxon>
        <taxon>Galloanserae</taxon>
        <taxon>Galliformes</taxon>
        <taxon>Phasianidae</taxon>
        <taxon>Phasianinae</taxon>
        <taxon>Gallus</taxon>
    </lineage>
</organism>
<feature type="chain" id="PRO_0000056619" description="Protein AATF">
    <location>
        <begin position="1"/>
        <end position="574"/>
    </location>
</feature>
<feature type="region of interest" description="Disordered" evidence="2">
    <location>
        <begin position="82"/>
        <end position="205"/>
    </location>
</feature>
<feature type="region of interest" description="Disordered" evidence="2">
    <location>
        <begin position="302"/>
        <end position="340"/>
    </location>
</feature>
<feature type="region of interest" description="Disordered" evidence="2">
    <location>
        <begin position="553"/>
        <end position="574"/>
    </location>
</feature>
<feature type="compositionally biased region" description="Acidic residues" evidence="2">
    <location>
        <begin position="86"/>
        <end position="97"/>
    </location>
</feature>
<feature type="compositionally biased region" description="Acidic residues" evidence="2">
    <location>
        <begin position="126"/>
        <end position="137"/>
    </location>
</feature>
<feature type="compositionally biased region" description="Acidic residues" evidence="2">
    <location>
        <begin position="168"/>
        <end position="186"/>
    </location>
</feature>
<feature type="compositionally biased region" description="Basic and acidic residues" evidence="2">
    <location>
        <begin position="187"/>
        <end position="198"/>
    </location>
</feature>
<feature type="compositionally biased region" description="Basic and acidic residues" evidence="2">
    <location>
        <begin position="302"/>
        <end position="312"/>
    </location>
</feature>
<feature type="compositionally biased region" description="Basic and acidic residues" evidence="2">
    <location>
        <begin position="322"/>
        <end position="331"/>
    </location>
</feature>
<accession>Q5ZIM6</accession>
<evidence type="ECO:0000250" key="1">
    <source>
        <dbReference type="UniProtKB" id="Q9NY61"/>
    </source>
</evidence>
<evidence type="ECO:0000256" key="2">
    <source>
        <dbReference type="SAM" id="MobiDB-lite"/>
    </source>
</evidence>
<evidence type="ECO:0000305" key="3"/>
<reference key="1">
    <citation type="journal article" date="2005" name="Genome Biol.">
        <title>Full-length cDNAs from chicken bursal lymphocytes to facilitate gene function analysis.</title>
        <authorList>
            <person name="Caldwell R.B."/>
            <person name="Kierzek A.M."/>
            <person name="Arakawa H."/>
            <person name="Bezzubov Y."/>
            <person name="Zaim J."/>
            <person name="Fiedler P."/>
            <person name="Kutter S."/>
            <person name="Blagodatski A."/>
            <person name="Kostovska D."/>
            <person name="Koter M."/>
            <person name="Plachy J."/>
            <person name="Carninci P."/>
            <person name="Hayashizaki Y."/>
            <person name="Buerstedde J.-M."/>
        </authorList>
    </citation>
    <scope>NUCLEOTIDE SEQUENCE [LARGE SCALE MRNA]</scope>
    <source>
        <strain>CB</strain>
        <tissue>Bursa of Fabricius</tissue>
    </source>
</reference>
<protein>
    <recommendedName>
        <fullName>Protein AATF</fullName>
    </recommendedName>
    <alternativeName>
        <fullName>Apoptosis-antagonizing transcription factor</fullName>
    </alternativeName>
</protein>
<proteinExistence type="evidence at transcript level"/>
<name>AATF_CHICK</name>
<keyword id="KW-0539">Nucleus</keyword>
<keyword id="KW-1185">Reference proteome</keyword>
<gene>
    <name type="primary">AATF</name>
    <name type="ORF">RCJMB04_24o4</name>
</gene>